<feature type="chain" id="PRO_0000383258" description="Nucleotide-binding protein LI0459">
    <location>
        <begin position="1"/>
        <end position="321"/>
    </location>
</feature>
<feature type="binding site" evidence="1">
    <location>
        <begin position="41"/>
        <end position="48"/>
    </location>
    <ligand>
        <name>ATP</name>
        <dbReference type="ChEBI" id="CHEBI:30616"/>
    </ligand>
</feature>
<proteinExistence type="inferred from homology"/>
<sequence>MTLKKIIPNLQKTQNNNNNSISSPLLPHTVQEYFPVIIIVGMSGAGKSTALHVFEDLQLVTADGIPPSLVTSMIHTVQSSSLEHVQGLALGINQHRIHTMQELEHTFQEMRSQHIYFTLLYLEADMPTLIKRYAATRRPHPLEQYHIGLEHALEEEAKRLIPIRQTADIVLDTTTYSIHDLRRFLQKSWNPYPEKIRSIKINIISFGFKYGVPNEADLLFDLRFLPNPYFVEELRPLSGMDKKVATYVLNSASGIKFKKHLIRFLSFLLPLYDAEGRYRITIALGCTGGKHRSVAISELLLHELTKKNYTVSIEHRHMELG</sequence>
<organism>
    <name type="scientific">Lawsonia intracellularis (strain PHE/MN1-00)</name>
    <dbReference type="NCBI Taxonomy" id="363253"/>
    <lineage>
        <taxon>Bacteria</taxon>
        <taxon>Pseudomonadati</taxon>
        <taxon>Thermodesulfobacteriota</taxon>
        <taxon>Desulfovibrionia</taxon>
        <taxon>Desulfovibrionales</taxon>
        <taxon>Desulfovibrionaceae</taxon>
        <taxon>Lawsonia</taxon>
    </lineage>
</organism>
<gene>
    <name type="ordered locus">LI0459</name>
</gene>
<evidence type="ECO:0000255" key="1">
    <source>
        <dbReference type="HAMAP-Rule" id="MF_00636"/>
    </source>
</evidence>
<protein>
    <recommendedName>
        <fullName evidence="1">Nucleotide-binding protein LI0459</fullName>
    </recommendedName>
</protein>
<comment type="function">
    <text evidence="1">Displays ATPase and GTPase activities.</text>
</comment>
<comment type="similarity">
    <text evidence="1">Belongs to the RapZ-like family.</text>
</comment>
<dbReference type="EMBL" id="AM180252">
    <property type="protein sequence ID" value="CAJ54513.1"/>
    <property type="molecule type" value="Genomic_DNA"/>
</dbReference>
<dbReference type="RefSeq" id="WP_011526543.1">
    <property type="nucleotide sequence ID" value="NC_008011.1"/>
</dbReference>
<dbReference type="SMR" id="Q1MR63"/>
<dbReference type="STRING" id="363253.LI0459"/>
<dbReference type="KEGG" id="lip:LI0459"/>
<dbReference type="eggNOG" id="COG1660">
    <property type="taxonomic scope" value="Bacteria"/>
</dbReference>
<dbReference type="HOGENOM" id="CLU_059558_0_0_7"/>
<dbReference type="OrthoDB" id="9784461at2"/>
<dbReference type="Proteomes" id="UP000002430">
    <property type="component" value="Chromosome"/>
</dbReference>
<dbReference type="GO" id="GO:0005524">
    <property type="term" value="F:ATP binding"/>
    <property type="evidence" value="ECO:0007669"/>
    <property type="project" value="UniProtKB-UniRule"/>
</dbReference>
<dbReference type="GO" id="GO:0005525">
    <property type="term" value="F:GTP binding"/>
    <property type="evidence" value="ECO:0007669"/>
    <property type="project" value="UniProtKB-UniRule"/>
</dbReference>
<dbReference type="HAMAP" id="MF_00636">
    <property type="entry name" value="RapZ_like"/>
    <property type="match status" value="1"/>
</dbReference>
<dbReference type="InterPro" id="IPR027417">
    <property type="entry name" value="P-loop_NTPase"/>
</dbReference>
<dbReference type="InterPro" id="IPR005337">
    <property type="entry name" value="RapZ-like"/>
</dbReference>
<dbReference type="InterPro" id="IPR053930">
    <property type="entry name" value="RapZ-like_N"/>
</dbReference>
<dbReference type="InterPro" id="IPR053931">
    <property type="entry name" value="RapZ_C"/>
</dbReference>
<dbReference type="NCBIfam" id="NF003828">
    <property type="entry name" value="PRK05416.1"/>
    <property type="match status" value="1"/>
</dbReference>
<dbReference type="PANTHER" id="PTHR30448">
    <property type="entry name" value="RNASE ADAPTER PROTEIN RAPZ"/>
    <property type="match status" value="1"/>
</dbReference>
<dbReference type="PANTHER" id="PTHR30448:SF0">
    <property type="entry name" value="RNASE ADAPTER PROTEIN RAPZ"/>
    <property type="match status" value="1"/>
</dbReference>
<dbReference type="Pfam" id="PF22740">
    <property type="entry name" value="PapZ_C"/>
    <property type="match status" value="1"/>
</dbReference>
<dbReference type="Pfam" id="PF03668">
    <property type="entry name" value="RapZ-like_N"/>
    <property type="match status" value="1"/>
</dbReference>
<dbReference type="PIRSF" id="PIRSF005052">
    <property type="entry name" value="P-loopkin"/>
    <property type="match status" value="1"/>
</dbReference>
<dbReference type="SUPFAM" id="SSF52540">
    <property type="entry name" value="P-loop containing nucleoside triphosphate hydrolases"/>
    <property type="match status" value="1"/>
</dbReference>
<accession>Q1MR63</accession>
<keyword id="KW-0067">ATP-binding</keyword>
<keyword id="KW-0342">GTP-binding</keyword>
<keyword id="KW-0547">Nucleotide-binding</keyword>
<keyword id="KW-1185">Reference proteome</keyword>
<reference key="1">
    <citation type="submission" date="2005-11" db="EMBL/GenBank/DDBJ databases">
        <title>The complete genome sequence of Lawsonia intracellularis: the causative agent of proliferative enteropathy.</title>
        <authorList>
            <person name="Kaur K."/>
            <person name="Zhang Q."/>
            <person name="Beckler D."/>
            <person name="Munir S."/>
            <person name="Li L."/>
            <person name="Kinsley K."/>
            <person name="Herron L."/>
            <person name="Peterson A."/>
            <person name="May B."/>
            <person name="Singh S."/>
            <person name="Gebhart C."/>
            <person name="Kapur V."/>
        </authorList>
    </citation>
    <scope>NUCLEOTIDE SEQUENCE [LARGE SCALE GENOMIC DNA]</scope>
    <source>
        <strain>PHE/MN1-00</strain>
    </source>
</reference>
<name>Y459_LAWIP</name>